<gene>
    <name type="primary">acnA</name>
    <name type="ordered locus">RBE_0098</name>
</gene>
<comment type="function">
    <text evidence="1 3">Involved in the catabolism of short chain fatty acids (SCFA) via the tricarboxylic acid (TCA)(acetyl degradation route) and probably the 2-methylcitrate cycle I (propionate degradation route). Catalyzes the reversible isomerization of citrate to isocitrate via cis-aconitate. Could catalyze the hydration of 2-methyl-cis-aconitate to yield (2R,3S)-2-methylisocitrate. The apo form of AcnA functions as a RNA-binding regulatory protein.</text>
</comment>
<comment type="catalytic activity">
    <reaction evidence="3">
        <text>citrate = D-threo-isocitrate</text>
        <dbReference type="Rhea" id="RHEA:10336"/>
        <dbReference type="ChEBI" id="CHEBI:15562"/>
        <dbReference type="ChEBI" id="CHEBI:16947"/>
        <dbReference type="EC" id="4.2.1.3"/>
    </reaction>
</comment>
<comment type="catalytic activity">
    <reaction evidence="3">
        <text>(2S,3R)-3-hydroxybutane-1,2,3-tricarboxylate = 2-methyl-cis-aconitate + H2O</text>
        <dbReference type="Rhea" id="RHEA:17941"/>
        <dbReference type="ChEBI" id="CHEBI:15377"/>
        <dbReference type="ChEBI" id="CHEBI:57429"/>
        <dbReference type="ChEBI" id="CHEBI:57872"/>
        <dbReference type="EC" id="4.2.1.99"/>
    </reaction>
</comment>
<comment type="cofactor">
    <cofactor evidence="1">
        <name>[4Fe-4S] cluster</name>
        <dbReference type="ChEBI" id="CHEBI:49883"/>
    </cofactor>
    <text evidence="1">Binds 1 [4Fe-4S] cluster per subunit.</text>
</comment>
<comment type="pathway">
    <text evidence="3">Carbohydrate metabolism; tricarboxylic acid cycle; isocitrate from oxaloacetate: step 2/2.</text>
</comment>
<comment type="pathway">
    <text evidence="3">Organic acid metabolism; propanoate degradation.</text>
</comment>
<comment type="subunit">
    <text evidence="1">Monomer.</text>
</comment>
<comment type="similarity">
    <text evidence="4">Belongs to the aconitase/IPM isomerase family.</text>
</comment>
<accession>Q1RKD5</accession>
<reference key="1">
    <citation type="journal article" date="2006" name="PLoS Genet.">
        <title>Genome sequence of Rickettsia bellii illuminates the role of amoebae in gene exchanges between intracellular pathogens.</title>
        <authorList>
            <person name="Ogata H."/>
            <person name="La Scola B."/>
            <person name="Audic S."/>
            <person name="Renesto P."/>
            <person name="Blanc G."/>
            <person name="Robert C."/>
            <person name="Fournier P.-E."/>
            <person name="Claverie J.-M."/>
            <person name="Raoult D."/>
        </authorList>
    </citation>
    <scope>NUCLEOTIDE SEQUENCE [LARGE SCALE GENOMIC DNA]</scope>
    <source>
        <strain>RML369-C</strain>
    </source>
</reference>
<evidence type="ECO:0000250" key="1">
    <source>
        <dbReference type="UniProtKB" id="P09339"/>
    </source>
</evidence>
<evidence type="ECO:0000250" key="2">
    <source>
        <dbReference type="UniProtKB" id="P36683"/>
    </source>
</evidence>
<evidence type="ECO:0000250" key="3">
    <source>
        <dbReference type="UniProtKB" id="Q8ZP52"/>
    </source>
</evidence>
<evidence type="ECO:0000305" key="4"/>
<name>ACNA_RICBR</name>
<protein>
    <recommendedName>
        <fullName evidence="3">Aconitate hydratase A</fullName>
        <shortName evidence="3">ACN</shortName>
        <shortName evidence="3">Aconitase</shortName>
        <ecNumber evidence="3">4.2.1.3</ecNumber>
    </recommendedName>
    <alternativeName>
        <fullName evidence="3">(2R,3S)-2-methylisocitrate dehydratase</fullName>
    </alternativeName>
    <alternativeName>
        <fullName evidence="3">(2S,3R)-3-hydroxybutane-1,2,3-tricarboxylate dehydratase</fullName>
    </alternativeName>
    <alternativeName>
        <fullName evidence="1">Iron-responsive protein-like</fullName>
        <shortName evidence="1">IRP-like</shortName>
    </alternativeName>
    <alternativeName>
        <fullName evidence="3">Probable 2-methyl-cis-aconitate hydratase</fullName>
        <ecNumber evidence="3">4.2.1.99</ecNumber>
    </alternativeName>
    <alternativeName>
        <fullName evidence="1">RNA-binding protein</fullName>
    </alternativeName>
</protein>
<keyword id="KW-0004">4Fe-4S</keyword>
<keyword id="KW-0408">Iron</keyword>
<keyword id="KW-0411">Iron-sulfur</keyword>
<keyword id="KW-0456">Lyase</keyword>
<keyword id="KW-0479">Metal-binding</keyword>
<keyword id="KW-0694">RNA-binding</keyword>
<keyword id="KW-0816">Tricarboxylic acid cycle</keyword>
<sequence>MQKMHNSEYLKELSVNNISYKIYDINKAASDIDLPLKKLPYSLRVLFENVLRTGSKQNLMVFKEWLKNKKSDAEIDFMPARVLMQDFTGVPAIVDLAAMRDAMKKIGGDPLKINPLIPVDLVIDHSVSVDSYASGSSFDKNVAMEMRRNIERYQFLKWGQQAFNNFKVVPPGTGICHQVNLEYLAKVVWHSNGVAYPDSLVGTDSHTTMVNGLSVLGWGVGGIEAEAAMLGQPLTMILPEVIGVKLTGKLTGTATATDLVLKITEMLRKKKVVGKFVEFYGEGLKAMTIADRATISNMAPEYGATCGFFPIDQETIKYLELTGRDKEQIKLVEEYAKAQDLWCNFDDAAEYTDILELDLSEVTSSLAGPRRPQDRVNLGDVSSGFKKELSTFSSNNISIDTKHAVANQNYEIGNGDVVIAAITSCTNTSNPSVMIGAALLAKKAIEQGLKVKPWVKTSLAPGSKVVTEYLKSSGLNQYLDQLGFNLVGYGCTTCIGNSGPLNPEIEETINKNGLVVASVLSGNRNFEGRINPLTKASYLASPILVVAYALSGSLNIDLTNHPLGKNDKGRDVYLKDIWPSKEEIDKVIANSINSSMFVEKYSDIFSGTKEWQSLEVTSSSNYAWDKSSTYINNPPYFENIGSKNSIKDIKSARILAIFGDSITTDHISPAGSISKTSPAAKYLTDHQISPIDFNSYGSRRGNHEVMMRGTFANIRIKNEMCKGVEGGFTINQLKNMQQTIYDAAMDYKANGVSAVIFAGKEYGSGSSRDWAAKGPQLLGVKAVIAESFERIHRSNLVGMGVLPLIFTNNMTRFDLKLDGSESIDIIGLNEHIKPYNSVKCIIKKQNGEMQTIDLILQIFTDNEINYIKHGSIMHFVVENLKNNHI</sequence>
<proteinExistence type="inferred from homology"/>
<feature type="chain" id="PRO_0000272342" description="Aconitate hydratase A">
    <location>
        <begin position="1"/>
        <end position="885"/>
    </location>
</feature>
<feature type="binding site" evidence="2">
    <location>
        <position position="425"/>
    </location>
    <ligand>
        <name>[4Fe-4S] cluster</name>
        <dbReference type="ChEBI" id="CHEBI:49883"/>
    </ligand>
</feature>
<feature type="binding site" evidence="2">
    <location>
        <position position="491"/>
    </location>
    <ligand>
        <name>[4Fe-4S] cluster</name>
        <dbReference type="ChEBI" id="CHEBI:49883"/>
    </ligand>
</feature>
<feature type="binding site" evidence="2">
    <location>
        <position position="494"/>
    </location>
    <ligand>
        <name>[4Fe-4S] cluster</name>
        <dbReference type="ChEBI" id="CHEBI:49883"/>
    </ligand>
</feature>
<organism>
    <name type="scientific">Rickettsia bellii (strain RML369-C)</name>
    <dbReference type="NCBI Taxonomy" id="336407"/>
    <lineage>
        <taxon>Bacteria</taxon>
        <taxon>Pseudomonadati</taxon>
        <taxon>Pseudomonadota</taxon>
        <taxon>Alphaproteobacteria</taxon>
        <taxon>Rickettsiales</taxon>
        <taxon>Rickettsiaceae</taxon>
        <taxon>Rickettsieae</taxon>
        <taxon>Rickettsia</taxon>
        <taxon>belli group</taxon>
    </lineage>
</organism>
<dbReference type="EC" id="4.2.1.3" evidence="3"/>
<dbReference type="EC" id="4.2.1.99" evidence="3"/>
<dbReference type="EMBL" id="CP000087">
    <property type="protein sequence ID" value="ABE04179.1"/>
    <property type="molecule type" value="Genomic_DNA"/>
</dbReference>
<dbReference type="RefSeq" id="WP_011476794.1">
    <property type="nucleotide sequence ID" value="NC_007940.1"/>
</dbReference>
<dbReference type="SMR" id="Q1RKD5"/>
<dbReference type="KEGG" id="rbe:RBE_0098"/>
<dbReference type="eggNOG" id="COG1048">
    <property type="taxonomic scope" value="Bacteria"/>
</dbReference>
<dbReference type="HOGENOM" id="CLU_013476_2_1_5"/>
<dbReference type="OrthoDB" id="9764318at2"/>
<dbReference type="UniPathway" id="UPA00223">
    <property type="reaction ID" value="UER00718"/>
</dbReference>
<dbReference type="UniPathway" id="UPA00946"/>
<dbReference type="Proteomes" id="UP000001951">
    <property type="component" value="Chromosome"/>
</dbReference>
<dbReference type="GO" id="GO:0047456">
    <property type="term" value="F:2-methylisocitrate dehydratase activity"/>
    <property type="evidence" value="ECO:0000250"/>
    <property type="project" value="UniProtKB"/>
</dbReference>
<dbReference type="GO" id="GO:0051539">
    <property type="term" value="F:4 iron, 4 sulfur cluster binding"/>
    <property type="evidence" value="ECO:0000250"/>
    <property type="project" value="UniProtKB"/>
</dbReference>
<dbReference type="GO" id="GO:0003994">
    <property type="term" value="F:aconitate hydratase activity"/>
    <property type="evidence" value="ECO:0000250"/>
    <property type="project" value="UniProtKB"/>
</dbReference>
<dbReference type="GO" id="GO:0046872">
    <property type="term" value="F:metal ion binding"/>
    <property type="evidence" value="ECO:0007669"/>
    <property type="project" value="UniProtKB-KW"/>
</dbReference>
<dbReference type="GO" id="GO:0003730">
    <property type="term" value="F:mRNA 3'-UTR binding"/>
    <property type="evidence" value="ECO:0000250"/>
    <property type="project" value="UniProtKB"/>
</dbReference>
<dbReference type="GO" id="GO:0003729">
    <property type="term" value="F:mRNA binding"/>
    <property type="evidence" value="ECO:0000250"/>
    <property type="project" value="UniProtKB"/>
</dbReference>
<dbReference type="GO" id="GO:0019679">
    <property type="term" value="P:propionate metabolic process, methylcitrate cycle"/>
    <property type="evidence" value="ECO:0000250"/>
    <property type="project" value="UniProtKB"/>
</dbReference>
<dbReference type="GO" id="GO:0006099">
    <property type="term" value="P:tricarboxylic acid cycle"/>
    <property type="evidence" value="ECO:0000250"/>
    <property type="project" value="UniProtKB"/>
</dbReference>
<dbReference type="CDD" id="cd01586">
    <property type="entry name" value="AcnA_IRP"/>
    <property type="match status" value="1"/>
</dbReference>
<dbReference type="CDD" id="cd01580">
    <property type="entry name" value="AcnA_IRP_Swivel"/>
    <property type="match status" value="1"/>
</dbReference>
<dbReference type="FunFam" id="3.20.19.10:FF:000001">
    <property type="entry name" value="Aconitate hydratase"/>
    <property type="match status" value="1"/>
</dbReference>
<dbReference type="FunFam" id="3.30.499.10:FF:000002">
    <property type="entry name" value="Aconitate hydratase"/>
    <property type="match status" value="1"/>
</dbReference>
<dbReference type="FunFam" id="3.30.499.10:FF:000020">
    <property type="entry name" value="Aconitate hydratase A"/>
    <property type="match status" value="1"/>
</dbReference>
<dbReference type="Gene3D" id="6.10.190.10">
    <property type="match status" value="1"/>
</dbReference>
<dbReference type="Gene3D" id="3.30.499.10">
    <property type="entry name" value="Aconitase, domain 3"/>
    <property type="match status" value="2"/>
</dbReference>
<dbReference type="Gene3D" id="3.20.19.10">
    <property type="entry name" value="Aconitase, domain 4"/>
    <property type="match status" value="1"/>
</dbReference>
<dbReference type="InterPro" id="IPR044137">
    <property type="entry name" value="AcnA_IRP_Swivel"/>
</dbReference>
<dbReference type="InterPro" id="IPR015931">
    <property type="entry name" value="Acnase/IPM_dHydase_lsu_aba_1/3"/>
</dbReference>
<dbReference type="InterPro" id="IPR001030">
    <property type="entry name" value="Acoase/IPM_deHydtase_lsu_aba"/>
</dbReference>
<dbReference type="InterPro" id="IPR015928">
    <property type="entry name" value="Aconitase/3IPM_dehydase_swvl"/>
</dbReference>
<dbReference type="InterPro" id="IPR006249">
    <property type="entry name" value="Aconitase/IRP2"/>
</dbReference>
<dbReference type="InterPro" id="IPR018136">
    <property type="entry name" value="Aconitase_4Fe-4S_BS"/>
</dbReference>
<dbReference type="InterPro" id="IPR036008">
    <property type="entry name" value="Aconitase_4Fe-4S_dom"/>
</dbReference>
<dbReference type="InterPro" id="IPR000573">
    <property type="entry name" value="AconitaseA/IPMdHydase_ssu_swvl"/>
</dbReference>
<dbReference type="NCBIfam" id="TIGR01341">
    <property type="entry name" value="aconitase_1"/>
    <property type="match status" value="1"/>
</dbReference>
<dbReference type="NCBIfam" id="NF006757">
    <property type="entry name" value="PRK09277.1"/>
    <property type="match status" value="1"/>
</dbReference>
<dbReference type="NCBIfam" id="NF009520">
    <property type="entry name" value="PRK12881.1"/>
    <property type="match status" value="1"/>
</dbReference>
<dbReference type="PANTHER" id="PTHR11670">
    <property type="entry name" value="ACONITASE/IRON-RESPONSIVE ELEMENT FAMILY MEMBER"/>
    <property type="match status" value="1"/>
</dbReference>
<dbReference type="Pfam" id="PF00330">
    <property type="entry name" value="Aconitase"/>
    <property type="match status" value="1"/>
</dbReference>
<dbReference type="Pfam" id="PF00694">
    <property type="entry name" value="Aconitase_C"/>
    <property type="match status" value="1"/>
</dbReference>
<dbReference type="PRINTS" id="PR00415">
    <property type="entry name" value="ACONITASE"/>
</dbReference>
<dbReference type="SUPFAM" id="SSF53732">
    <property type="entry name" value="Aconitase iron-sulfur domain"/>
    <property type="match status" value="1"/>
</dbReference>
<dbReference type="SUPFAM" id="SSF52016">
    <property type="entry name" value="LeuD/IlvD-like"/>
    <property type="match status" value="1"/>
</dbReference>
<dbReference type="PROSITE" id="PS00450">
    <property type="entry name" value="ACONITASE_1"/>
    <property type="match status" value="1"/>
</dbReference>
<dbReference type="PROSITE" id="PS01244">
    <property type="entry name" value="ACONITASE_2"/>
    <property type="match status" value="1"/>
</dbReference>